<evidence type="ECO:0000255" key="1">
    <source>
        <dbReference type="HAMAP-Rule" id="MF_01396"/>
    </source>
</evidence>
<gene>
    <name evidence="1" type="primary">atpE</name>
    <name type="ordered locus">PEPE_1322</name>
</gene>
<reference key="1">
    <citation type="journal article" date="2006" name="Proc. Natl. Acad. Sci. U.S.A.">
        <title>Comparative genomics of the lactic acid bacteria.</title>
        <authorList>
            <person name="Makarova K.S."/>
            <person name="Slesarev A."/>
            <person name="Wolf Y.I."/>
            <person name="Sorokin A."/>
            <person name="Mirkin B."/>
            <person name="Koonin E.V."/>
            <person name="Pavlov A."/>
            <person name="Pavlova N."/>
            <person name="Karamychev V."/>
            <person name="Polouchine N."/>
            <person name="Shakhova V."/>
            <person name="Grigoriev I."/>
            <person name="Lou Y."/>
            <person name="Rohksar D."/>
            <person name="Lucas S."/>
            <person name="Huang K."/>
            <person name="Goodstein D.M."/>
            <person name="Hawkins T."/>
            <person name="Plengvidhya V."/>
            <person name="Welker D."/>
            <person name="Hughes J."/>
            <person name="Goh Y."/>
            <person name="Benson A."/>
            <person name="Baldwin K."/>
            <person name="Lee J.-H."/>
            <person name="Diaz-Muniz I."/>
            <person name="Dosti B."/>
            <person name="Smeianov V."/>
            <person name="Wechter W."/>
            <person name="Barabote R."/>
            <person name="Lorca G."/>
            <person name="Altermann E."/>
            <person name="Barrangou R."/>
            <person name="Ganesan B."/>
            <person name="Xie Y."/>
            <person name="Rawsthorne H."/>
            <person name="Tamir D."/>
            <person name="Parker C."/>
            <person name="Breidt F."/>
            <person name="Broadbent J.R."/>
            <person name="Hutkins R."/>
            <person name="O'Sullivan D."/>
            <person name="Steele J."/>
            <person name="Unlu G."/>
            <person name="Saier M.H. Jr."/>
            <person name="Klaenhammer T."/>
            <person name="Richardson P."/>
            <person name="Kozyavkin S."/>
            <person name="Weimer B.C."/>
            <person name="Mills D.A."/>
        </authorList>
    </citation>
    <scope>NUCLEOTIDE SEQUENCE [LARGE SCALE GENOMIC DNA]</scope>
    <source>
        <strain>ATCC 25745 / CCUG 21536 / LMG 10740 / 183-1w</strain>
    </source>
</reference>
<comment type="function">
    <text evidence="1">F(1)F(0) ATP synthase produces ATP from ADP in the presence of a proton or sodium gradient. F-type ATPases consist of two structural domains, F(1) containing the extramembraneous catalytic core and F(0) containing the membrane proton channel, linked together by a central stalk and a peripheral stalk. During catalysis, ATP synthesis in the catalytic domain of F(1) is coupled via a rotary mechanism of the central stalk subunits to proton translocation.</text>
</comment>
<comment type="function">
    <text evidence="1">Key component of the F(0) channel; it plays a direct role in translocation across the membrane. A homomeric c-ring of between 10-14 subunits forms the central stalk rotor element with the F(1) delta and epsilon subunits.</text>
</comment>
<comment type="subunit">
    <text evidence="1">F-type ATPases have 2 components, F(1) - the catalytic core - and F(0) - the membrane proton channel. F(1) has five subunits: alpha(3), beta(3), gamma(1), delta(1), epsilon(1). F(0) has three main subunits: a(1), b(2) and c(10-14). The alpha and beta chains form an alternating ring which encloses part of the gamma chain. F(1) is attached to F(0) by a central stalk formed by the gamma and epsilon chains, while a peripheral stalk is formed by the delta and b chains.</text>
</comment>
<comment type="subcellular location">
    <subcellularLocation>
        <location evidence="1">Cell membrane</location>
        <topology evidence="1">Multi-pass membrane protein</topology>
    </subcellularLocation>
</comment>
<comment type="similarity">
    <text evidence="1">Belongs to the ATPase C chain family.</text>
</comment>
<feature type="chain" id="PRO_1000184431" description="ATP synthase subunit c">
    <location>
        <begin position="1"/>
        <end position="70"/>
    </location>
</feature>
<feature type="transmembrane region" description="Helical" evidence="1">
    <location>
        <begin position="4"/>
        <end position="24"/>
    </location>
</feature>
<feature type="transmembrane region" description="Helical" evidence="1">
    <location>
        <begin position="47"/>
        <end position="67"/>
    </location>
</feature>
<feature type="site" description="Reversibly protonated during proton transport" evidence="1">
    <location>
        <position position="54"/>
    </location>
</feature>
<dbReference type="EMBL" id="CP000422">
    <property type="protein sequence ID" value="ABJ68363.1"/>
    <property type="molecule type" value="Genomic_DNA"/>
</dbReference>
<dbReference type="RefSeq" id="WP_002833682.1">
    <property type="nucleotide sequence ID" value="NC_008525.1"/>
</dbReference>
<dbReference type="SMR" id="Q03EK9"/>
<dbReference type="STRING" id="278197.PEPE_1322"/>
<dbReference type="GeneID" id="33061451"/>
<dbReference type="KEGG" id="ppe:PEPE_1322"/>
<dbReference type="eggNOG" id="COG0636">
    <property type="taxonomic scope" value="Bacteria"/>
</dbReference>
<dbReference type="HOGENOM" id="CLU_148047_1_1_9"/>
<dbReference type="OrthoDB" id="2357540at2"/>
<dbReference type="Proteomes" id="UP000000773">
    <property type="component" value="Chromosome"/>
</dbReference>
<dbReference type="GO" id="GO:0005886">
    <property type="term" value="C:plasma membrane"/>
    <property type="evidence" value="ECO:0007669"/>
    <property type="project" value="UniProtKB-SubCell"/>
</dbReference>
<dbReference type="GO" id="GO:0045259">
    <property type="term" value="C:proton-transporting ATP synthase complex"/>
    <property type="evidence" value="ECO:0007669"/>
    <property type="project" value="UniProtKB-KW"/>
</dbReference>
<dbReference type="GO" id="GO:0033177">
    <property type="term" value="C:proton-transporting two-sector ATPase complex, proton-transporting domain"/>
    <property type="evidence" value="ECO:0007669"/>
    <property type="project" value="InterPro"/>
</dbReference>
<dbReference type="GO" id="GO:0008289">
    <property type="term" value="F:lipid binding"/>
    <property type="evidence" value="ECO:0007669"/>
    <property type="project" value="UniProtKB-KW"/>
</dbReference>
<dbReference type="GO" id="GO:0046933">
    <property type="term" value="F:proton-transporting ATP synthase activity, rotational mechanism"/>
    <property type="evidence" value="ECO:0007669"/>
    <property type="project" value="UniProtKB-UniRule"/>
</dbReference>
<dbReference type="CDD" id="cd18185">
    <property type="entry name" value="ATP-synt_Fo_c_ATPE"/>
    <property type="match status" value="1"/>
</dbReference>
<dbReference type="FunFam" id="1.20.20.10:FF:000004">
    <property type="entry name" value="ATP synthase subunit c"/>
    <property type="match status" value="1"/>
</dbReference>
<dbReference type="Gene3D" id="1.20.20.10">
    <property type="entry name" value="F1F0 ATP synthase subunit C"/>
    <property type="match status" value="1"/>
</dbReference>
<dbReference type="HAMAP" id="MF_01396">
    <property type="entry name" value="ATP_synth_c_bact"/>
    <property type="match status" value="1"/>
</dbReference>
<dbReference type="InterPro" id="IPR005953">
    <property type="entry name" value="ATP_synth_csu_bac/chlpt"/>
</dbReference>
<dbReference type="InterPro" id="IPR000454">
    <property type="entry name" value="ATP_synth_F0_csu"/>
</dbReference>
<dbReference type="InterPro" id="IPR020537">
    <property type="entry name" value="ATP_synth_F0_csu_DDCD_BS"/>
</dbReference>
<dbReference type="InterPro" id="IPR038662">
    <property type="entry name" value="ATP_synth_F0_csu_sf"/>
</dbReference>
<dbReference type="InterPro" id="IPR002379">
    <property type="entry name" value="ATPase_proteolipid_c-like_dom"/>
</dbReference>
<dbReference type="InterPro" id="IPR035921">
    <property type="entry name" value="F/V-ATP_Csub_sf"/>
</dbReference>
<dbReference type="NCBIfam" id="TIGR01260">
    <property type="entry name" value="ATP_synt_c"/>
    <property type="match status" value="1"/>
</dbReference>
<dbReference type="NCBIfam" id="NF005363">
    <property type="entry name" value="PRK06876.1"/>
    <property type="match status" value="1"/>
</dbReference>
<dbReference type="Pfam" id="PF00137">
    <property type="entry name" value="ATP-synt_C"/>
    <property type="match status" value="1"/>
</dbReference>
<dbReference type="PRINTS" id="PR00124">
    <property type="entry name" value="ATPASEC"/>
</dbReference>
<dbReference type="SUPFAM" id="SSF81333">
    <property type="entry name" value="F1F0 ATP synthase subunit C"/>
    <property type="match status" value="1"/>
</dbReference>
<dbReference type="PROSITE" id="PS00605">
    <property type="entry name" value="ATPASE_C"/>
    <property type="match status" value="1"/>
</dbReference>
<keyword id="KW-0066">ATP synthesis</keyword>
<keyword id="KW-1003">Cell membrane</keyword>
<keyword id="KW-0138">CF(0)</keyword>
<keyword id="KW-0375">Hydrogen ion transport</keyword>
<keyword id="KW-0406">Ion transport</keyword>
<keyword id="KW-0446">Lipid-binding</keyword>
<keyword id="KW-0472">Membrane</keyword>
<keyword id="KW-0812">Transmembrane</keyword>
<keyword id="KW-1133">Transmembrane helix</keyword>
<keyword id="KW-0813">Transport</keyword>
<name>ATPL_PEDPA</name>
<organism>
    <name type="scientific">Pediococcus pentosaceus (strain ATCC 25745 / CCUG 21536 / LMG 10740 / 183-1w)</name>
    <dbReference type="NCBI Taxonomy" id="278197"/>
    <lineage>
        <taxon>Bacteria</taxon>
        <taxon>Bacillati</taxon>
        <taxon>Bacillota</taxon>
        <taxon>Bacilli</taxon>
        <taxon>Lactobacillales</taxon>
        <taxon>Lactobacillaceae</taxon>
        <taxon>Pediococcus</taxon>
    </lineage>
</organism>
<accession>Q03EK9</accession>
<proteinExistence type="inferred from homology"/>
<sequence>MGAIAAGIAMFGAAIGGGIGDGIVVAKMLEGMARQPELSGQLRTTMFIGVGLVEAMPILAFVISLLVMNK</sequence>
<protein>
    <recommendedName>
        <fullName evidence="1">ATP synthase subunit c</fullName>
    </recommendedName>
    <alternativeName>
        <fullName evidence="1">ATP synthase F(0) sector subunit c</fullName>
    </alternativeName>
    <alternativeName>
        <fullName evidence="1">F-type ATPase subunit c</fullName>
        <shortName evidence="1">F-ATPase subunit c</shortName>
    </alternativeName>
    <alternativeName>
        <fullName evidence="1">Lipid-binding protein</fullName>
    </alternativeName>
</protein>